<evidence type="ECO:0000255" key="1">
    <source>
        <dbReference type="HAMAP-Rule" id="MF_01245"/>
    </source>
</evidence>
<protein>
    <recommendedName>
        <fullName evidence="1">UPF0248 protein TSIB_1445</fullName>
    </recommendedName>
</protein>
<feature type="chain" id="PRO_1000214100" description="UPF0248 protein TSIB_1445">
    <location>
        <begin position="1"/>
        <end position="87"/>
    </location>
</feature>
<name>Y1445_THESM</name>
<keyword id="KW-1185">Reference proteome</keyword>
<comment type="similarity">
    <text evidence="1">Belongs to the UPF0248 family.</text>
</comment>
<organism>
    <name type="scientific">Thermococcus sibiricus (strain DSM 12597 / MM 739)</name>
    <dbReference type="NCBI Taxonomy" id="604354"/>
    <lineage>
        <taxon>Archaea</taxon>
        <taxon>Methanobacteriati</taxon>
        <taxon>Methanobacteriota</taxon>
        <taxon>Thermococci</taxon>
        <taxon>Thermococcales</taxon>
        <taxon>Thermococcaceae</taxon>
        <taxon>Thermococcus</taxon>
    </lineage>
</organism>
<proteinExistence type="inferred from homology"/>
<reference key="1">
    <citation type="journal article" date="2009" name="Appl. Environ. Microbiol.">
        <title>Metabolic versatility and indigenous origin of the archaeon Thermococcus sibiricus, isolated from a siberian oil reservoir, as revealed by genome analysis.</title>
        <authorList>
            <person name="Mardanov A.V."/>
            <person name="Ravin N.V."/>
            <person name="Svetlitchnyi V.A."/>
            <person name="Beletsky A.V."/>
            <person name="Miroshnichenko M.L."/>
            <person name="Bonch-Osmolovskaya E.A."/>
            <person name="Skryabin K.G."/>
        </authorList>
    </citation>
    <scope>NUCLEOTIDE SEQUENCE [LARGE SCALE GENOMIC DNA]</scope>
    <source>
        <strain>DSM 12597 / MM 739</strain>
    </source>
</reference>
<sequence>MRKGFVKEVLSKIKYDARENEEDYYIVIEHRGTYGNIKKIPVKMITLGHGYFFIEDTQIPYHRILAVIKKDGKVVWKKRGLGDEFKF</sequence>
<dbReference type="EMBL" id="CP001463">
    <property type="protein sequence ID" value="ACS90496.1"/>
    <property type="molecule type" value="Genomic_DNA"/>
</dbReference>
<dbReference type="RefSeq" id="WP_015849713.1">
    <property type="nucleotide sequence ID" value="NC_012883.1"/>
</dbReference>
<dbReference type="STRING" id="604354.TSIB_1445"/>
<dbReference type="GeneID" id="8096449"/>
<dbReference type="KEGG" id="tsi:TSIB_1445"/>
<dbReference type="eggNOG" id="arCOG01302">
    <property type="taxonomic scope" value="Archaea"/>
</dbReference>
<dbReference type="HOGENOM" id="CLU_172276_3_1_2"/>
<dbReference type="OrthoDB" id="14794at2157"/>
<dbReference type="Proteomes" id="UP000009079">
    <property type="component" value="Chromosome"/>
</dbReference>
<dbReference type="HAMAP" id="MF_01245">
    <property type="entry name" value="UPF0248"/>
    <property type="match status" value="1"/>
</dbReference>
<dbReference type="InterPro" id="IPR040459">
    <property type="entry name" value="MJ1316"/>
</dbReference>
<dbReference type="InterPro" id="IPR007547">
    <property type="entry name" value="UPF0248"/>
</dbReference>
<dbReference type="NCBIfam" id="NF003272">
    <property type="entry name" value="PRK04257.1"/>
    <property type="match status" value="1"/>
</dbReference>
<dbReference type="Pfam" id="PF04457">
    <property type="entry name" value="MJ1316"/>
    <property type="match status" value="1"/>
</dbReference>
<accession>C6A4F1</accession>
<gene>
    <name type="ordered locus">TSIB_1445</name>
</gene>